<accession>Q5L6V2</accession>
<proteinExistence type="inferred from homology"/>
<organism>
    <name type="scientific">Chlamydia abortus (strain DSM 27085 / S26/3)</name>
    <name type="common">Chlamydophila abortus</name>
    <dbReference type="NCBI Taxonomy" id="218497"/>
    <lineage>
        <taxon>Bacteria</taxon>
        <taxon>Pseudomonadati</taxon>
        <taxon>Chlamydiota</taxon>
        <taxon>Chlamydiia</taxon>
        <taxon>Chlamydiales</taxon>
        <taxon>Chlamydiaceae</taxon>
        <taxon>Chlamydia/Chlamydophila group</taxon>
        <taxon>Chlamydia</taxon>
    </lineage>
</organism>
<comment type="function">
    <text evidence="1">Catalyzes the formation of 4-diphosphocytidyl-2-C-methyl-D-erythritol from CTP and 2-C-methyl-D-erythritol 4-phosphate (MEP).</text>
</comment>
<comment type="catalytic activity">
    <reaction evidence="1">
        <text>2-C-methyl-D-erythritol 4-phosphate + CTP + H(+) = 4-CDP-2-C-methyl-D-erythritol + diphosphate</text>
        <dbReference type="Rhea" id="RHEA:13429"/>
        <dbReference type="ChEBI" id="CHEBI:15378"/>
        <dbReference type="ChEBI" id="CHEBI:33019"/>
        <dbReference type="ChEBI" id="CHEBI:37563"/>
        <dbReference type="ChEBI" id="CHEBI:57823"/>
        <dbReference type="ChEBI" id="CHEBI:58262"/>
        <dbReference type="EC" id="2.7.7.60"/>
    </reaction>
</comment>
<comment type="pathway">
    <text evidence="1">Isoprenoid biosynthesis; isopentenyl diphosphate biosynthesis via DXP pathway; isopentenyl diphosphate from 1-deoxy-D-xylulose 5-phosphate: step 2/6.</text>
</comment>
<comment type="similarity">
    <text evidence="1">Belongs to the IspD/TarI cytidylyltransferase family. IspD subfamily.</text>
</comment>
<dbReference type="EC" id="2.7.7.60" evidence="1"/>
<dbReference type="EMBL" id="CR848038">
    <property type="protein sequence ID" value="CAH63618.1"/>
    <property type="molecule type" value="Genomic_DNA"/>
</dbReference>
<dbReference type="SMR" id="Q5L6V2"/>
<dbReference type="KEGG" id="cab:CAB160"/>
<dbReference type="eggNOG" id="COG1211">
    <property type="taxonomic scope" value="Bacteria"/>
</dbReference>
<dbReference type="HOGENOM" id="CLU_061281_2_2_0"/>
<dbReference type="OrthoDB" id="9806837at2"/>
<dbReference type="UniPathway" id="UPA00056">
    <property type="reaction ID" value="UER00093"/>
</dbReference>
<dbReference type="Proteomes" id="UP000001012">
    <property type="component" value="Chromosome"/>
</dbReference>
<dbReference type="GO" id="GO:0050518">
    <property type="term" value="F:2-C-methyl-D-erythritol 4-phosphate cytidylyltransferase activity"/>
    <property type="evidence" value="ECO:0007669"/>
    <property type="project" value="UniProtKB-UniRule"/>
</dbReference>
<dbReference type="GO" id="GO:0019288">
    <property type="term" value="P:isopentenyl diphosphate biosynthetic process, methylerythritol 4-phosphate pathway"/>
    <property type="evidence" value="ECO:0007669"/>
    <property type="project" value="UniProtKB-UniRule"/>
</dbReference>
<dbReference type="CDD" id="cd02516">
    <property type="entry name" value="CDP-ME_synthetase"/>
    <property type="match status" value="1"/>
</dbReference>
<dbReference type="Gene3D" id="3.90.550.10">
    <property type="entry name" value="Spore Coat Polysaccharide Biosynthesis Protein SpsA, Chain A"/>
    <property type="match status" value="1"/>
</dbReference>
<dbReference type="HAMAP" id="MF_00108">
    <property type="entry name" value="IspD"/>
    <property type="match status" value="1"/>
</dbReference>
<dbReference type="InterPro" id="IPR001228">
    <property type="entry name" value="IspD"/>
</dbReference>
<dbReference type="InterPro" id="IPR034683">
    <property type="entry name" value="IspD/TarI"/>
</dbReference>
<dbReference type="InterPro" id="IPR050088">
    <property type="entry name" value="IspD/TarI_cytidylyltransf_bact"/>
</dbReference>
<dbReference type="InterPro" id="IPR018294">
    <property type="entry name" value="ISPD_synthase_CS"/>
</dbReference>
<dbReference type="InterPro" id="IPR029044">
    <property type="entry name" value="Nucleotide-diphossugar_trans"/>
</dbReference>
<dbReference type="NCBIfam" id="TIGR00453">
    <property type="entry name" value="ispD"/>
    <property type="match status" value="1"/>
</dbReference>
<dbReference type="PANTHER" id="PTHR32125">
    <property type="entry name" value="2-C-METHYL-D-ERYTHRITOL 4-PHOSPHATE CYTIDYLYLTRANSFERASE, CHLOROPLASTIC"/>
    <property type="match status" value="1"/>
</dbReference>
<dbReference type="PANTHER" id="PTHR32125:SF4">
    <property type="entry name" value="2-C-METHYL-D-ERYTHRITOL 4-PHOSPHATE CYTIDYLYLTRANSFERASE, CHLOROPLASTIC"/>
    <property type="match status" value="1"/>
</dbReference>
<dbReference type="Pfam" id="PF01128">
    <property type="entry name" value="IspD"/>
    <property type="match status" value="1"/>
</dbReference>
<dbReference type="SUPFAM" id="SSF53448">
    <property type="entry name" value="Nucleotide-diphospho-sugar transferases"/>
    <property type="match status" value="1"/>
</dbReference>
<dbReference type="PROSITE" id="PS01295">
    <property type="entry name" value="ISPD"/>
    <property type="match status" value="1"/>
</dbReference>
<feature type="chain" id="PRO_1000117438" description="2-C-methyl-D-erythritol 4-phosphate cytidylyltransferase">
    <location>
        <begin position="1"/>
        <end position="217"/>
    </location>
</feature>
<feature type="site" description="Transition state stabilizer" evidence="1">
    <location>
        <position position="22"/>
    </location>
</feature>
<feature type="site" description="Transition state stabilizer" evidence="1">
    <location>
        <position position="29"/>
    </location>
</feature>
<feature type="site" description="Positions MEP for the nucleophilic attack" evidence="1">
    <location>
        <position position="147"/>
    </location>
</feature>
<feature type="site" description="Positions MEP for the nucleophilic attack" evidence="1">
    <location>
        <position position="203"/>
    </location>
</feature>
<protein>
    <recommendedName>
        <fullName evidence="1">2-C-methyl-D-erythritol 4-phosphate cytidylyltransferase</fullName>
        <ecNumber evidence="1">2.7.7.60</ecNumber>
    </recommendedName>
    <alternativeName>
        <fullName evidence="1">4-diphosphocytidyl-2C-methyl-D-erythritol synthase</fullName>
    </alternativeName>
    <alternativeName>
        <fullName evidence="1">MEP cytidylyltransferase</fullName>
        <shortName evidence="1">MCT</shortName>
    </alternativeName>
</protein>
<gene>
    <name evidence="1" type="primary">ispD</name>
    <name type="ordered locus">CAB160</name>
</gene>
<name>ISPD_CHLAB</name>
<evidence type="ECO:0000255" key="1">
    <source>
        <dbReference type="HAMAP-Rule" id="MF_00108"/>
    </source>
</evidence>
<sequence length="217" mass="24178">MYGVSMDPKCSLILLSGGKGERFGANQPKQYLPFRGEPLILHALNMALRIPEISEIIVVCDVNYESIFEGYPVKFARPGTRRQDSVFSGLQQVANPWVLVHDGVRPFIYPDEVTELVTAAYQTGAATLVSNVPYTIKQRDPVKTLDRDALSIVHTPQCIKTQILLEGLERANQERITLVDDTQAAELLNLPVALVFNKHPQIKVTYPEDLTLAHALL</sequence>
<keyword id="KW-0414">Isoprene biosynthesis</keyword>
<keyword id="KW-0548">Nucleotidyltransferase</keyword>
<keyword id="KW-0808">Transferase</keyword>
<reference key="1">
    <citation type="journal article" date="2005" name="Genome Res.">
        <title>The Chlamydophila abortus genome sequence reveals an array of variable proteins that contribute to interspecies variation.</title>
        <authorList>
            <person name="Thomson N.R."/>
            <person name="Yeats C."/>
            <person name="Bell K."/>
            <person name="Holden M.T.G."/>
            <person name="Bentley S.D."/>
            <person name="Livingstone M."/>
            <person name="Cerdeno-Tarraga A.-M."/>
            <person name="Harris B."/>
            <person name="Doggett J."/>
            <person name="Ormond D."/>
            <person name="Mungall K."/>
            <person name="Clarke K."/>
            <person name="Feltwell T."/>
            <person name="Hance Z."/>
            <person name="Sanders M."/>
            <person name="Quail M.A."/>
            <person name="Price C."/>
            <person name="Barrell B.G."/>
            <person name="Parkhill J."/>
            <person name="Longbottom D."/>
        </authorList>
    </citation>
    <scope>NUCLEOTIDE SEQUENCE [LARGE SCALE GENOMIC DNA]</scope>
    <source>
        <strain>DSM 27085 / S26/3</strain>
    </source>
</reference>